<name>PANC_BARHE</name>
<organism>
    <name type="scientific">Bartonella henselae (strain ATCC 49882 / DSM 28221 / CCUG 30454 / Houston 1)</name>
    <name type="common">Rochalimaea henselae</name>
    <dbReference type="NCBI Taxonomy" id="283166"/>
    <lineage>
        <taxon>Bacteria</taxon>
        <taxon>Pseudomonadati</taxon>
        <taxon>Pseudomonadota</taxon>
        <taxon>Alphaproteobacteria</taxon>
        <taxon>Hyphomicrobiales</taxon>
        <taxon>Bartonellaceae</taxon>
        <taxon>Bartonella</taxon>
    </lineage>
</organism>
<sequence length="284" mass="32021">MRVLKTIPEVRQSITEERRLGFSIGLVPTMGALHNGHIALVRRARAMCDRVLVSIFVNPKQFGPDEDFDKYPRDLKGDCALLEEAGVEYLFTPSVEEMWPPGNETIVNVEKLSRMLIGKLRPGHFCGVTSVVAKLFNIVQPDKAFFGEKDFQQILIVRRMVEDLAFPIEVVGVPVLREADGVASSSRNQFLTLEDRKAAKIIPESGKAAENLYRQGERSVDKLCKIVRDILQQESRAIIESIDLRDMETLSVVKGRLDKSAVLLLTVRFGEIRLIDQYILQEKG</sequence>
<protein>
    <recommendedName>
        <fullName evidence="1">Pantothenate synthetase</fullName>
        <shortName evidence="1">PS</shortName>
        <ecNumber evidence="1">6.3.2.1</ecNumber>
    </recommendedName>
    <alternativeName>
        <fullName evidence="1">Pantoate--beta-alanine ligase</fullName>
    </alternativeName>
    <alternativeName>
        <fullName evidence="1">Pantoate-activating enzyme</fullName>
    </alternativeName>
</protein>
<keyword id="KW-0002">3D-structure</keyword>
<keyword id="KW-0067">ATP-binding</keyword>
<keyword id="KW-0963">Cytoplasm</keyword>
<keyword id="KW-0436">Ligase</keyword>
<keyword id="KW-0547">Nucleotide-binding</keyword>
<keyword id="KW-0566">Pantothenate biosynthesis</keyword>
<accession>Q6G456</accession>
<proteinExistence type="evidence at protein level"/>
<comment type="function">
    <text evidence="1">Catalyzes the condensation of pantoate with beta-alanine in an ATP-dependent reaction via a pantoyl-adenylate intermediate.</text>
</comment>
<comment type="catalytic activity">
    <reaction evidence="1">
        <text>(R)-pantoate + beta-alanine + ATP = (R)-pantothenate + AMP + diphosphate + H(+)</text>
        <dbReference type="Rhea" id="RHEA:10912"/>
        <dbReference type="ChEBI" id="CHEBI:15378"/>
        <dbReference type="ChEBI" id="CHEBI:15980"/>
        <dbReference type="ChEBI" id="CHEBI:29032"/>
        <dbReference type="ChEBI" id="CHEBI:30616"/>
        <dbReference type="ChEBI" id="CHEBI:33019"/>
        <dbReference type="ChEBI" id="CHEBI:57966"/>
        <dbReference type="ChEBI" id="CHEBI:456215"/>
        <dbReference type="EC" id="6.3.2.1"/>
    </reaction>
</comment>
<comment type="pathway">
    <text evidence="1">Cofactor biosynthesis; (R)-pantothenate biosynthesis; (R)-pantothenate from (R)-pantoate and beta-alanine: step 1/1.</text>
</comment>
<comment type="subunit">
    <text evidence="1">Homodimer.</text>
</comment>
<comment type="subcellular location">
    <subcellularLocation>
        <location evidence="1">Cytoplasm</location>
    </subcellularLocation>
</comment>
<comment type="miscellaneous">
    <text evidence="1">The reaction proceeds by a bi uni uni bi ping pong mechanism.</text>
</comment>
<comment type="similarity">
    <text evidence="1">Belongs to the pantothenate synthetase family.</text>
</comment>
<comment type="sequence caution" evidence="2">
    <conflict type="erroneous initiation">
        <sequence resource="EMBL-CDS" id="CAF27320"/>
    </conflict>
</comment>
<feature type="chain" id="PRO_0000128206" description="Pantothenate synthetase">
    <location>
        <begin position="1"/>
        <end position="284"/>
    </location>
</feature>
<feature type="active site" description="Proton donor" evidence="1">
    <location>
        <position position="37"/>
    </location>
</feature>
<feature type="binding site" evidence="1">
    <location>
        <begin position="30"/>
        <end position="37"/>
    </location>
    <ligand>
        <name>ATP</name>
        <dbReference type="ChEBI" id="CHEBI:30616"/>
    </ligand>
</feature>
<feature type="binding site" evidence="1">
    <location>
        <position position="61"/>
    </location>
    <ligand>
        <name>(R)-pantoate</name>
        <dbReference type="ChEBI" id="CHEBI:15980"/>
    </ligand>
</feature>
<feature type="binding site" evidence="1">
    <location>
        <position position="61"/>
    </location>
    <ligand>
        <name>beta-alanine</name>
        <dbReference type="ChEBI" id="CHEBI:57966"/>
    </ligand>
</feature>
<feature type="binding site" evidence="1">
    <location>
        <begin position="147"/>
        <end position="150"/>
    </location>
    <ligand>
        <name>ATP</name>
        <dbReference type="ChEBI" id="CHEBI:30616"/>
    </ligand>
</feature>
<feature type="binding site" evidence="1">
    <location>
        <position position="153"/>
    </location>
    <ligand>
        <name>(R)-pantoate</name>
        <dbReference type="ChEBI" id="CHEBI:15980"/>
    </ligand>
</feature>
<feature type="binding site" evidence="1">
    <location>
        <position position="176"/>
    </location>
    <ligand>
        <name>ATP</name>
        <dbReference type="ChEBI" id="CHEBI:30616"/>
    </ligand>
</feature>
<feature type="binding site" evidence="1">
    <location>
        <begin position="184"/>
        <end position="187"/>
    </location>
    <ligand>
        <name>ATP</name>
        <dbReference type="ChEBI" id="CHEBI:30616"/>
    </ligand>
</feature>
<feature type="strand" evidence="3">
    <location>
        <begin position="2"/>
        <end position="4"/>
    </location>
</feature>
<feature type="helix" evidence="3">
    <location>
        <begin position="7"/>
        <end position="19"/>
    </location>
</feature>
<feature type="strand" evidence="3">
    <location>
        <begin position="24"/>
        <end position="29"/>
    </location>
</feature>
<feature type="helix" evidence="3">
    <location>
        <begin position="35"/>
        <end position="47"/>
    </location>
</feature>
<feature type="strand" evidence="3">
    <location>
        <begin position="49"/>
        <end position="55"/>
    </location>
</feature>
<feature type="helix" evidence="3">
    <location>
        <begin position="59"/>
        <end position="61"/>
    </location>
</feature>
<feature type="helix" evidence="3">
    <location>
        <begin position="75"/>
        <end position="84"/>
    </location>
</feature>
<feature type="strand" evidence="3">
    <location>
        <begin position="88"/>
        <end position="91"/>
    </location>
</feature>
<feature type="helix" evidence="3">
    <location>
        <begin position="95"/>
        <end position="98"/>
    </location>
</feature>
<feature type="strand" evidence="3">
    <location>
        <begin position="105"/>
        <end position="109"/>
    </location>
</feature>
<feature type="helix" evidence="3">
    <location>
        <begin position="112"/>
        <end position="114"/>
    </location>
</feature>
<feature type="helix" evidence="3">
    <location>
        <begin position="117"/>
        <end position="120"/>
    </location>
</feature>
<feature type="helix" evidence="3">
    <location>
        <begin position="124"/>
        <end position="139"/>
    </location>
</feature>
<feature type="strand" evidence="3">
    <location>
        <begin position="142"/>
        <end position="150"/>
    </location>
</feature>
<feature type="helix" evidence="3">
    <location>
        <begin position="151"/>
        <end position="164"/>
    </location>
</feature>
<feature type="strand" evidence="3">
    <location>
        <begin position="169"/>
        <end position="173"/>
    </location>
</feature>
<feature type="helix" evidence="3">
    <location>
        <begin position="186"/>
        <end position="190"/>
    </location>
</feature>
<feature type="helix" evidence="3">
    <location>
        <begin position="193"/>
        <end position="198"/>
    </location>
</feature>
<feature type="helix" evidence="3">
    <location>
        <begin position="201"/>
        <end position="214"/>
    </location>
</feature>
<feature type="helix" evidence="3">
    <location>
        <begin position="220"/>
        <end position="232"/>
    </location>
</feature>
<feature type="strand" evidence="3">
    <location>
        <begin position="237"/>
        <end position="246"/>
    </location>
</feature>
<feature type="turn" evidence="3">
    <location>
        <begin position="247"/>
        <end position="249"/>
    </location>
</feature>
<feature type="strand" evidence="3">
    <location>
        <begin position="261"/>
        <end position="269"/>
    </location>
</feature>
<feature type="strand" evidence="3">
    <location>
        <begin position="272"/>
        <end position="280"/>
    </location>
</feature>
<dbReference type="EC" id="6.3.2.1" evidence="1"/>
<dbReference type="EMBL" id="BX897699">
    <property type="protein sequence ID" value="CAF27320.1"/>
    <property type="status" value="ALT_INIT"/>
    <property type="molecule type" value="Genomic_DNA"/>
</dbReference>
<dbReference type="RefSeq" id="WP_034447650.1">
    <property type="nucleotide sequence ID" value="NZ_LRIJ02000001.1"/>
</dbReference>
<dbReference type="PDB" id="7TOT">
    <property type="method" value="X-ray"/>
    <property type="resolution" value="1.80 A"/>
    <property type="chains" value="A/B=1-284"/>
</dbReference>
<dbReference type="PDBsum" id="7TOT"/>
<dbReference type="SMR" id="Q6G456"/>
<dbReference type="PaxDb" id="283166-BH05120"/>
<dbReference type="EnsemblBacteria" id="CAF27320">
    <property type="protein sequence ID" value="CAF27320"/>
    <property type="gene ID" value="BH05120"/>
</dbReference>
<dbReference type="GeneID" id="92985169"/>
<dbReference type="KEGG" id="bhe:BH05120"/>
<dbReference type="eggNOG" id="COG0414">
    <property type="taxonomic scope" value="Bacteria"/>
</dbReference>
<dbReference type="OrthoDB" id="9773087at2"/>
<dbReference type="UniPathway" id="UPA00028">
    <property type="reaction ID" value="UER00005"/>
</dbReference>
<dbReference type="Proteomes" id="UP000000421">
    <property type="component" value="Chromosome"/>
</dbReference>
<dbReference type="GO" id="GO:0005829">
    <property type="term" value="C:cytosol"/>
    <property type="evidence" value="ECO:0007669"/>
    <property type="project" value="TreeGrafter"/>
</dbReference>
<dbReference type="GO" id="GO:0005524">
    <property type="term" value="F:ATP binding"/>
    <property type="evidence" value="ECO:0007669"/>
    <property type="project" value="UniProtKB-KW"/>
</dbReference>
<dbReference type="GO" id="GO:0004592">
    <property type="term" value="F:pantoate-beta-alanine ligase activity"/>
    <property type="evidence" value="ECO:0007669"/>
    <property type="project" value="UniProtKB-UniRule"/>
</dbReference>
<dbReference type="GO" id="GO:0015940">
    <property type="term" value="P:pantothenate biosynthetic process"/>
    <property type="evidence" value="ECO:0007669"/>
    <property type="project" value="UniProtKB-UniRule"/>
</dbReference>
<dbReference type="CDD" id="cd00560">
    <property type="entry name" value="PanC"/>
    <property type="match status" value="1"/>
</dbReference>
<dbReference type="FunFam" id="3.40.50.620:FF:000013">
    <property type="entry name" value="Pantothenate synthetase"/>
    <property type="match status" value="1"/>
</dbReference>
<dbReference type="Gene3D" id="3.40.50.620">
    <property type="entry name" value="HUPs"/>
    <property type="match status" value="1"/>
</dbReference>
<dbReference type="Gene3D" id="3.30.1300.10">
    <property type="entry name" value="Pantoate-beta-alanine ligase, C-terminal domain"/>
    <property type="match status" value="1"/>
</dbReference>
<dbReference type="HAMAP" id="MF_00158">
    <property type="entry name" value="PanC"/>
    <property type="match status" value="1"/>
</dbReference>
<dbReference type="InterPro" id="IPR004821">
    <property type="entry name" value="Cyt_trans-like"/>
</dbReference>
<dbReference type="InterPro" id="IPR003721">
    <property type="entry name" value="Pantoate_ligase"/>
</dbReference>
<dbReference type="InterPro" id="IPR042176">
    <property type="entry name" value="Pantoate_ligase_C"/>
</dbReference>
<dbReference type="InterPro" id="IPR014729">
    <property type="entry name" value="Rossmann-like_a/b/a_fold"/>
</dbReference>
<dbReference type="NCBIfam" id="TIGR00125">
    <property type="entry name" value="cyt_tran_rel"/>
    <property type="match status" value="1"/>
</dbReference>
<dbReference type="NCBIfam" id="TIGR00018">
    <property type="entry name" value="panC"/>
    <property type="match status" value="1"/>
</dbReference>
<dbReference type="PANTHER" id="PTHR21299">
    <property type="entry name" value="CYTIDYLATE KINASE/PANTOATE-BETA-ALANINE LIGASE"/>
    <property type="match status" value="1"/>
</dbReference>
<dbReference type="PANTHER" id="PTHR21299:SF1">
    <property type="entry name" value="PANTOATE--BETA-ALANINE LIGASE"/>
    <property type="match status" value="1"/>
</dbReference>
<dbReference type="Pfam" id="PF02569">
    <property type="entry name" value="Pantoate_ligase"/>
    <property type="match status" value="1"/>
</dbReference>
<dbReference type="SUPFAM" id="SSF52374">
    <property type="entry name" value="Nucleotidylyl transferase"/>
    <property type="match status" value="1"/>
</dbReference>
<gene>
    <name evidence="1" type="primary">panC</name>
    <name type="ordered locus">BH05120</name>
</gene>
<reference key="1">
    <citation type="journal article" date="2004" name="Proc. Natl. Acad. Sci. U.S.A.">
        <title>The louse-borne human pathogen Bartonella quintana is a genomic derivative of the zoonotic agent Bartonella henselae.</title>
        <authorList>
            <person name="Alsmark U.C.M."/>
            <person name="Frank A.C."/>
            <person name="Karlberg E.O."/>
            <person name="Legault B.-A."/>
            <person name="Ardell D.H."/>
            <person name="Canbaeck B."/>
            <person name="Eriksson A.-S."/>
            <person name="Naeslund A.K."/>
            <person name="Handley S.A."/>
            <person name="Huvet M."/>
            <person name="La Scola B."/>
            <person name="Holmberg M."/>
            <person name="Andersson S.G.E."/>
        </authorList>
    </citation>
    <scope>NUCLEOTIDE SEQUENCE [LARGE SCALE GENOMIC DNA]</scope>
    <source>
        <strain>ATCC 49882 / DSM 28221 / CCUG 30454 / Houston 1</strain>
    </source>
</reference>
<evidence type="ECO:0000255" key="1">
    <source>
        <dbReference type="HAMAP-Rule" id="MF_00158"/>
    </source>
</evidence>
<evidence type="ECO:0000305" key="2"/>
<evidence type="ECO:0007829" key="3">
    <source>
        <dbReference type="PDB" id="7TOT"/>
    </source>
</evidence>